<proteinExistence type="inferred from homology"/>
<protein>
    <recommendedName>
        <fullName evidence="1">Chromosomal replication initiator protein DnaA</fullName>
    </recommendedName>
</protein>
<evidence type="ECO:0000255" key="1">
    <source>
        <dbReference type="HAMAP-Rule" id="MF_00377"/>
    </source>
</evidence>
<gene>
    <name evidence="1" type="primary">dnaA</name>
    <name type="ordered locus">BH0001</name>
</gene>
<comment type="function">
    <text evidence="1">Plays an essential role in the initiation and regulation of chromosomal replication. ATP-DnaA binds to the origin of replication (oriC) to initiate formation of the DNA replication initiation complex once per cell cycle. Binds the DnaA box (a 9 base pair repeat at the origin) and separates the double-stranded (ds)DNA. Forms a right-handed helical filament on oriC DNA; dsDNA binds to the exterior of the filament while single-stranded (ss)DNA is stabiized in the filament's interior. The ATP-DnaA-oriC complex binds and stabilizes one strand of the AT-rich DNA unwinding element (DUE), permitting loading of DNA polymerase. After initiation quickly degrades to an ADP-DnaA complex that is not apt for DNA replication. Binds acidic phospholipids.</text>
</comment>
<comment type="subunit">
    <text evidence="1">Oligomerizes as a right-handed, spiral filament on DNA at oriC.</text>
</comment>
<comment type="subcellular location">
    <subcellularLocation>
        <location evidence="1">Cytoplasm</location>
    </subcellularLocation>
</comment>
<comment type="domain">
    <text evidence="1">Domain I is involved in oligomerization and binding regulators, domain II is flexibile and of varying length in different bacteria, domain III forms the AAA+ region, while domain IV binds dsDNA.</text>
</comment>
<comment type="similarity">
    <text evidence="1">Belongs to the DnaA family.</text>
</comment>
<dbReference type="EMBL" id="AB013492">
    <property type="protein sequence ID" value="BAA82685.1"/>
    <property type="molecule type" value="Genomic_DNA"/>
</dbReference>
<dbReference type="EMBL" id="BA000004">
    <property type="protein sequence ID" value="BAB03720.1"/>
    <property type="molecule type" value="Genomic_DNA"/>
</dbReference>
<dbReference type="PIR" id="A83650">
    <property type="entry name" value="A83650"/>
</dbReference>
<dbReference type="RefSeq" id="WP_010896185.1">
    <property type="nucleotide sequence ID" value="NC_002570.2"/>
</dbReference>
<dbReference type="SMR" id="Q9RCA2"/>
<dbReference type="STRING" id="272558.gene:10725816"/>
<dbReference type="KEGG" id="bha:BH0001"/>
<dbReference type="eggNOG" id="COG0593">
    <property type="taxonomic scope" value="Bacteria"/>
</dbReference>
<dbReference type="HOGENOM" id="CLU_026910_3_1_9"/>
<dbReference type="OrthoDB" id="9807019at2"/>
<dbReference type="Proteomes" id="UP000001258">
    <property type="component" value="Chromosome"/>
</dbReference>
<dbReference type="GO" id="GO:0005737">
    <property type="term" value="C:cytoplasm"/>
    <property type="evidence" value="ECO:0007669"/>
    <property type="project" value="UniProtKB-SubCell"/>
</dbReference>
<dbReference type="GO" id="GO:0005886">
    <property type="term" value="C:plasma membrane"/>
    <property type="evidence" value="ECO:0007669"/>
    <property type="project" value="TreeGrafter"/>
</dbReference>
<dbReference type="GO" id="GO:0005524">
    <property type="term" value="F:ATP binding"/>
    <property type="evidence" value="ECO:0007669"/>
    <property type="project" value="UniProtKB-UniRule"/>
</dbReference>
<dbReference type="GO" id="GO:0016887">
    <property type="term" value="F:ATP hydrolysis activity"/>
    <property type="evidence" value="ECO:0007669"/>
    <property type="project" value="InterPro"/>
</dbReference>
<dbReference type="GO" id="GO:0003688">
    <property type="term" value="F:DNA replication origin binding"/>
    <property type="evidence" value="ECO:0007669"/>
    <property type="project" value="UniProtKB-UniRule"/>
</dbReference>
<dbReference type="GO" id="GO:0008289">
    <property type="term" value="F:lipid binding"/>
    <property type="evidence" value="ECO:0007669"/>
    <property type="project" value="UniProtKB-KW"/>
</dbReference>
<dbReference type="GO" id="GO:0006270">
    <property type="term" value="P:DNA replication initiation"/>
    <property type="evidence" value="ECO:0007669"/>
    <property type="project" value="UniProtKB-UniRule"/>
</dbReference>
<dbReference type="GO" id="GO:0006275">
    <property type="term" value="P:regulation of DNA replication"/>
    <property type="evidence" value="ECO:0007669"/>
    <property type="project" value="UniProtKB-UniRule"/>
</dbReference>
<dbReference type="CDD" id="cd00009">
    <property type="entry name" value="AAA"/>
    <property type="match status" value="1"/>
</dbReference>
<dbReference type="CDD" id="cd06571">
    <property type="entry name" value="Bac_DnaA_C"/>
    <property type="match status" value="1"/>
</dbReference>
<dbReference type="FunFam" id="1.10.1750.10:FF:000003">
    <property type="entry name" value="Chromosomal replication initiator protein DnaA"/>
    <property type="match status" value="1"/>
</dbReference>
<dbReference type="FunFam" id="1.10.8.60:FF:000003">
    <property type="entry name" value="Chromosomal replication initiator protein DnaA"/>
    <property type="match status" value="1"/>
</dbReference>
<dbReference type="FunFam" id="3.40.50.300:FF:000150">
    <property type="entry name" value="Chromosomal replication initiator protein DnaA"/>
    <property type="match status" value="1"/>
</dbReference>
<dbReference type="Gene3D" id="1.10.1750.10">
    <property type="match status" value="1"/>
</dbReference>
<dbReference type="Gene3D" id="1.10.8.60">
    <property type="match status" value="1"/>
</dbReference>
<dbReference type="Gene3D" id="3.30.300.180">
    <property type="match status" value="1"/>
</dbReference>
<dbReference type="Gene3D" id="3.40.50.300">
    <property type="entry name" value="P-loop containing nucleotide triphosphate hydrolases"/>
    <property type="match status" value="1"/>
</dbReference>
<dbReference type="HAMAP" id="MF_00377">
    <property type="entry name" value="DnaA_bact"/>
    <property type="match status" value="1"/>
</dbReference>
<dbReference type="InterPro" id="IPR003593">
    <property type="entry name" value="AAA+_ATPase"/>
</dbReference>
<dbReference type="InterPro" id="IPR001957">
    <property type="entry name" value="Chromosome_initiator_DnaA"/>
</dbReference>
<dbReference type="InterPro" id="IPR020591">
    <property type="entry name" value="Chromosome_initiator_DnaA-like"/>
</dbReference>
<dbReference type="InterPro" id="IPR018312">
    <property type="entry name" value="Chromosome_initiator_DnaA_CS"/>
</dbReference>
<dbReference type="InterPro" id="IPR013159">
    <property type="entry name" value="DnaA_C"/>
</dbReference>
<dbReference type="InterPro" id="IPR013317">
    <property type="entry name" value="DnaA_dom"/>
</dbReference>
<dbReference type="InterPro" id="IPR024633">
    <property type="entry name" value="DnaA_N_dom"/>
</dbReference>
<dbReference type="InterPro" id="IPR038454">
    <property type="entry name" value="DnaA_N_sf"/>
</dbReference>
<dbReference type="InterPro" id="IPR027417">
    <property type="entry name" value="P-loop_NTPase"/>
</dbReference>
<dbReference type="InterPro" id="IPR010921">
    <property type="entry name" value="Trp_repressor/repl_initiator"/>
</dbReference>
<dbReference type="NCBIfam" id="TIGR00362">
    <property type="entry name" value="DnaA"/>
    <property type="match status" value="1"/>
</dbReference>
<dbReference type="NCBIfam" id="NF010686">
    <property type="entry name" value="PRK14086.1"/>
    <property type="match status" value="1"/>
</dbReference>
<dbReference type="PANTHER" id="PTHR30050">
    <property type="entry name" value="CHROMOSOMAL REPLICATION INITIATOR PROTEIN DNAA"/>
    <property type="match status" value="1"/>
</dbReference>
<dbReference type="PANTHER" id="PTHR30050:SF2">
    <property type="entry name" value="CHROMOSOMAL REPLICATION INITIATOR PROTEIN DNAA"/>
    <property type="match status" value="1"/>
</dbReference>
<dbReference type="Pfam" id="PF00308">
    <property type="entry name" value="Bac_DnaA"/>
    <property type="match status" value="1"/>
</dbReference>
<dbReference type="Pfam" id="PF08299">
    <property type="entry name" value="Bac_DnaA_C"/>
    <property type="match status" value="1"/>
</dbReference>
<dbReference type="Pfam" id="PF11638">
    <property type="entry name" value="DnaA_N"/>
    <property type="match status" value="1"/>
</dbReference>
<dbReference type="PRINTS" id="PR00051">
    <property type="entry name" value="DNAA"/>
</dbReference>
<dbReference type="SMART" id="SM00382">
    <property type="entry name" value="AAA"/>
    <property type="match status" value="1"/>
</dbReference>
<dbReference type="SMART" id="SM00760">
    <property type="entry name" value="Bac_DnaA_C"/>
    <property type="match status" value="1"/>
</dbReference>
<dbReference type="SUPFAM" id="SSF52540">
    <property type="entry name" value="P-loop containing nucleoside triphosphate hydrolases"/>
    <property type="match status" value="1"/>
</dbReference>
<dbReference type="SUPFAM" id="SSF48295">
    <property type="entry name" value="TrpR-like"/>
    <property type="match status" value="1"/>
</dbReference>
<dbReference type="PROSITE" id="PS01008">
    <property type="entry name" value="DNAA"/>
    <property type="match status" value="1"/>
</dbReference>
<name>DNAA_HALH5</name>
<sequence>MENIHDLWERALKSMEKKVSKPSFETWLKQTKANSIEDSTIIITAPNEFARDWLEKHYDELISETIDDLTGVRLYPKFVIPTSQLDEPFVEQELKKPMKQPPAQNGEMPNNMLNDKYTFDTFVIGSGNRFAHAASLAVAEAPAKAYNPLFIYGGVGLGKTHLMHAIGHYVMDHNPNAKVVYLSSEKFTNEFINAIRDNKAVNFRNKYRNVDVLLIDDIQFLAGKEQTQEEFFHTFNALHEDNKQIVISSDRPPKEIPTLEDRLRSRFEWGLITDITPPDLETRIAILRKKAKAENLDIPNEVMLYIANQIDTNIRELEGALIRVVAYSSLINQDMNADLAAEALKDIIPNAKPRVLTITDIQKTVGEYFHVKLEDFKAKKRTKSVAFPRQIAMYLSRELTDASLPKIGSEFGGRDHTTVIHAHEKISKLLSTDQELQDKIQDISDKLRS</sequence>
<reference key="1">
    <citation type="journal article" date="1999" name="Biosci. Biotechnol. Biochem.">
        <title>Replication origin region of the chromosome of alkaliphilic Bacillus halodurans C-125.</title>
        <authorList>
            <person name="Takami H."/>
            <person name="Masui N."/>
            <person name="Nakasone K."/>
            <person name="Horikoshi K."/>
        </authorList>
    </citation>
    <scope>NUCLEOTIDE SEQUENCE [GENOMIC DNA]</scope>
    <source>
        <strain>ATCC BAA-125 / DSM 18197 / FERM 7344 / JCM 9153 / C-125</strain>
    </source>
</reference>
<reference key="2">
    <citation type="journal article" date="2000" name="Nucleic Acids Res.">
        <title>Complete genome sequence of the alkaliphilic bacterium Bacillus halodurans and genomic sequence comparison with Bacillus subtilis.</title>
        <authorList>
            <person name="Takami H."/>
            <person name="Nakasone K."/>
            <person name="Takaki Y."/>
            <person name="Maeno G."/>
            <person name="Sasaki R."/>
            <person name="Masui N."/>
            <person name="Fuji F."/>
            <person name="Hirama C."/>
            <person name="Nakamura Y."/>
            <person name="Ogasawara N."/>
            <person name="Kuhara S."/>
            <person name="Horikoshi K."/>
        </authorList>
    </citation>
    <scope>NUCLEOTIDE SEQUENCE [LARGE SCALE GENOMIC DNA]</scope>
    <source>
        <strain>ATCC BAA-125 / DSM 18197 / FERM 7344 / JCM 9153 / C-125</strain>
    </source>
</reference>
<keyword id="KW-0067">ATP-binding</keyword>
<keyword id="KW-0963">Cytoplasm</keyword>
<keyword id="KW-0235">DNA replication</keyword>
<keyword id="KW-0238">DNA-binding</keyword>
<keyword id="KW-0446">Lipid-binding</keyword>
<keyword id="KW-0547">Nucleotide-binding</keyword>
<keyword id="KW-1185">Reference proteome</keyword>
<feature type="chain" id="PRO_0000114129" description="Chromosomal replication initiator protein DnaA">
    <location>
        <begin position="1"/>
        <end position="449"/>
    </location>
</feature>
<feature type="region of interest" description="Domain I, interacts with DnaA modulators" evidence="1">
    <location>
        <begin position="1"/>
        <end position="72"/>
    </location>
</feature>
<feature type="region of interest" description="Domain II" evidence="1">
    <location>
        <begin position="72"/>
        <end position="111"/>
    </location>
</feature>
<feature type="region of interest" description="Domain III, AAA+ region" evidence="1">
    <location>
        <begin position="112"/>
        <end position="328"/>
    </location>
</feature>
<feature type="region of interest" description="Domain IV, binds dsDNA" evidence="1">
    <location>
        <begin position="329"/>
        <end position="449"/>
    </location>
</feature>
<feature type="binding site" evidence="1">
    <location>
        <position position="156"/>
    </location>
    <ligand>
        <name>ATP</name>
        <dbReference type="ChEBI" id="CHEBI:30616"/>
    </ligand>
</feature>
<feature type="binding site" evidence="1">
    <location>
        <position position="158"/>
    </location>
    <ligand>
        <name>ATP</name>
        <dbReference type="ChEBI" id="CHEBI:30616"/>
    </ligand>
</feature>
<feature type="binding site" evidence="1">
    <location>
        <position position="159"/>
    </location>
    <ligand>
        <name>ATP</name>
        <dbReference type="ChEBI" id="CHEBI:30616"/>
    </ligand>
</feature>
<feature type="binding site" evidence="1">
    <location>
        <position position="160"/>
    </location>
    <ligand>
        <name>ATP</name>
        <dbReference type="ChEBI" id="CHEBI:30616"/>
    </ligand>
</feature>
<organism>
    <name type="scientific">Halalkalibacterium halodurans (strain ATCC BAA-125 / DSM 18197 / FERM 7344 / JCM 9153 / C-125)</name>
    <name type="common">Bacillus halodurans</name>
    <dbReference type="NCBI Taxonomy" id="272558"/>
    <lineage>
        <taxon>Bacteria</taxon>
        <taxon>Bacillati</taxon>
        <taxon>Bacillota</taxon>
        <taxon>Bacilli</taxon>
        <taxon>Bacillales</taxon>
        <taxon>Bacillaceae</taxon>
        <taxon>Halalkalibacterium (ex Joshi et al. 2022)</taxon>
    </lineage>
</organism>
<accession>Q9RCA2</accession>